<reference key="1">
    <citation type="journal article" date="2008" name="Genome Res.">
        <title>Comparative genome analysis of Salmonella enteritidis PT4 and Salmonella gallinarum 287/91 provides insights into evolutionary and host adaptation pathways.</title>
        <authorList>
            <person name="Thomson N.R."/>
            <person name="Clayton D.J."/>
            <person name="Windhorst D."/>
            <person name="Vernikos G."/>
            <person name="Davidson S."/>
            <person name="Churcher C."/>
            <person name="Quail M.A."/>
            <person name="Stevens M."/>
            <person name="Jones M.A."/>
            <person name="Watson M."/>
            <person name="Barron A."/>
            <person name="Layton A."/>
            <person name="Pickard D."/>
            <person name="Kingsley R.A."/>
            <person name="Bignell A."/>
            <person name="Clark L."/>
            <person name="Harris B."/>
            <person name="Ormond D."/>
            <person name="Abdellah Z."/>
            <person name="Brooks K."/>
            <person name="Cherevach I."/>
            <person name="Chillingworth T."/>
            <person name="Woodward J."/>
            <person name="Norberczak H."/>
            <person name="Lord A."/>
            <person name="Arrowsmith C."/>
            <person name="Jagels K."/>
            <person name="Moule S."/>
            <person name="Mungall K."/>
            <person name="Saunders M."/>
            <person name="Whitehead S."/>
            <person name="Chabalgoity J.A."/>
            <person name="Maskell D."/>
            <person name="Humphreys T."/>
            <person name="Roberts M."/>
            <person name="Barrow P.A."/>
            <person name="Dougan G."/>
            <person name="Parkhill J."/>
        </authorList>
    </citation>
    <scope>NUCLEOTIDE SEQUENCE [LARGE SCALE GENOMIC DNA]</scope>
    <source>
        <strain>287/91 / NCTC 13346</strain>
    </source>
</reference>
<proteinExistence type="inferred from homology"/>
<comment type="function">
    <text evidence="1">Involved in unsaturated fatty acids biosynthesis. Catalyzes the dehydration of short chain beta-hydroxyacyl-ACPs and long chain saturated and unsaturated beta-hydroxyacyl-ACPs.</text>
</comment>
<comment type="catalytic activity">
    <reaction evidence="1">
        <text>a (3R)-hydroxyacyl-[ACP] = a (2E)-enoyl-[ACP] + H2O</text>
        <dbReference type="Rhea" id="RHEA:13097"/>
        <dbReference type="Rhea" id="RHEA-COMP:9925"/>
        <dbReference type="Rhea" id="RHEA-COMP:9945"/>
        <dbReference type="ChEBI" id="CHEBI:15377"/>
        <dbReference type="ChEBI" id="CHEBI:78784"/>
        <dbReference type="ChEBI" id="CHEBI:78827"/>
        <dbReference type="EC" id="4.2.1.59"/>
    </reaction>
</comment>
<comment type="subcellular location">
    <subcellularLocation>
        <location evidence="1">Cytoplasm</location>
    </subcellularLocation>
</comment>
<comment type="similarity">
    <text evidence="1">Belongs to the thioester dehydratase family. FabZ subfamily.</text>
</comment>
<protein>
    <recommendedName>
        <fullName evidence="1">3-hydroxyacyl-[acyl-carrier-protein] dehydratase FabZ</fullName>
        <ecNumber evidence="1">4.2.1.59</ecNumber>
    </recommendedName>
    <alternativeName>
        <fullName evidence="1">(3R)-hydroxymyristoyl-[acyl-carrier-protein] dehydratase</fullName>
        <shortName evidence="1">(3R)-hydroxymyristoyl-ACP dehydrase</shortName>
    </alternativeName>
    <alternativeName>
        <fullName evidence="1">Beta-hydroxyacyl-ACP dehydratase</fullName>
    </alternativeName>
</protein>
<sequence length="151" mass="16999">MTTNTHTLQIEEILELLPHRFPFLLVDRVLDFEEGRFLRAVKNVSVNEPFFQGHFPGKPILPGVLILEAMAQATGILAFKSVGKLEPGELYYFAGIDEARFKRPVVPGDQMIMEVTFEKTRRGLTRFKGVALVDGKVVCEATMMCARSREA</sequence>
<name>FABZ_SALG2</name>
<evidence type="ECO:0000255" key="1">
    <source>
        <dbReference type="HAMAP-Rule" id="MF_00406"/>
    </source>
</evidence>
<keyword id="KW-0963">Cytoplasm</keyword>
<keyword id="KW-0441">Lipid A biosynthesis</keyword>
<keyword id="KW-0444">Lipid biosynthesis</keyword>
<keyword id="KW-0443">Lipid metabolism</keyword>
<keyword id="KW-0456">Lyase</keyword>
<dbReference type="EC" id="4.2.1.59" evidence="1"/>
<dbReference type="EMBL" id="AM933173">
    <property type="protein sequence ID" value="CAR36138.1"/>
    <property type="molecule type" value="Genomic_DNA"/>
</dbReference>
<dbReference type="RefSeq" id="WP_000210741.1">
    <property type="nucleotide sequence ID" value="NC_011274.1"/>
</dbReference>
<dbReference type="SMR" id="B5RHG5"/>
<dbReference type="GeneID" id="66754751"/>
<dbReference type="KEGG" id="seg:SG0231"/>
<dbReference type="HOGENOM" id="CLU_078912_1_0_6"/>
<dbReference type="Proteomes" id="UP000008321">
    <property type="component" value="Chromosome"/>
</dbReference>
<dbReference type="GO" id="GO:0005737">
    <property type="term" value="C:cytoplasm"/>
    <property type="evidence" value="ECO:0007669"/>
    <property type="project" value="UniProtKB-SubCell"/>
</dbReference>
<dbReference type="GO" id="GO:0016020">
    <property type="term" value="C:membrane"/>
    <property type="evidence" value="ECO:0007669"/>
    <property type="project" value="GOC"/>
</dbReference>
<dbReference type="GO" id="GO:0019171">
    <property type="term" value="F:(3R)-hydroxyacyl-[acyl-carrier-protein] dehydratase activity"/>
    <property type="evidence" value="ECO:0007669"/>
    <property type="project" value="UniProtKB-EC"/>
</dbReference>
<dbReference type="GO" id="GO:0006633">
    <property type="term" value="P:fatty acid biosynthetic process"/>
    <property type="evidence" value="ECO:0007669"/>
    <property type="project" value="UniProtKB-UniRule"/>
</dbReference>
<dbReference type="GO" id="GO:0009245">
    <property type="term" value="P:lipid A biosynthetic process"/>
    <property type="evidence" value="ECO:0007669"/>
    <property type="project" value="UniProtKB-UniRule"/>
</dbReference>
<dbReference type="CDD" id="cd01288">
    <property type="entry name" value="FabZ"/>
    <property type="match status" value="1"/>
</dbReference>
<dbReference type="FunFam" id="3.10.129.10:FF:000001">
    <property type="entry name" value="3-hydroxyacyl-[acyl-carrier-protein] dehydratase FabZ"/>
    <property type="match status" value="1"/>
</dbReference>
<dbReference type="Gene3D" id="3.10.129.10">
    <property type="entry name" value="Hotdog Thioesterase"/>
    <property type="match status" value="1"/>
</dbReference>
<dbReference type="HAMAP" id="MF_00406">
    <property type="entry name" value="FabZ"/>
    <property type="match status" value="1"/>
</dbReference>
<dbReference type="InterPro" id="IPR013114">
    <property type="entry name" value="FabA_FabZ"/>
</dbReference>
<dbReference type="InterPro" id="IPR010084">
    <property type="entry name" value="FabZ"/>
</dbReference>
<dbReference type="InterPro" id="IPR029069">
    <property type="entry name" value="HotDog_dom_sf"/>
</dbReference>
<dbReference type="NCBIfam" id="TIGR01750">
    <property type="entry name" value="fabZ"/>
    <property type="match status" value="1"/>
</dbReference>
<dbReference type="NCBIfam" id="NF000582">
    <property type="entry name" value="PRK00006.1"/>
    <property type="match status" value="1"/>
</dbReference>
<dbReference type="PANTHER" id="PTHR30272">
    <property type="entry name" value="3-HYDROXYACYL-[ACYL-CARRIER-PROTEIN] DEHYDRATASE"/>
    <property type="match status" value="1"/>
</dbReference>
<dbReference type="PANTHER" id="PTHR30272:SF1">
    <property type="entry name" value="3-HYDROXYACYL-[ACYL-CARRIER-PROTEIN] DEHYDRATASE"/>
    <property type="match status" value="1"/>
</dbReference>
<dbReference type="Pfam" id="PF07977">
    <property type="entry name" value="FabA"/>
    <property type="match status" value="1"/>
</dbReference>
<dbReference type="SUPFAM" id="SSF54637">
    <property type="entry name" value="Thioesterase/thiol ester dehydrase-isomerase"/>
    <property type="match status" value="1"/>
</dbReference>
<accession>B5RHG5</accession>
<gene>
    <name evidence="1" type="primary">fabZ</name>
    <name type="ordered locus">SG0231</name>
</gene>
<organism>
    <name type="scientific">Salmonella gallinarum (strain 287/91 / NCTC 13346)</name>
    <dbReference type="NCBI Taxonomy" id="550538"/>
    <lineage>
        <taxon>Bacteria</taxon>
        <taxon>Pseudomonadati</taxon>
        <taxon>Pseudomonadota</taxon>
        <taxon>Gammaproteobacteria</taxon>
        <taxon>Enterobacterales</taxon>
        <taxon>Enterobacteriaceae</taxon>
        <taxon>Salmonella</taxon>
    </lineage>
</organism>
<feature type="chain" id="PRO_1000123661" description="3-hydroxyacyl-[acyl-carrier-protein] dehydratase FabZ">
    <location>
        <begin position="1"/>
        <end position="151"/>
    </location>
</feature>
<feature type="active site" evidence="1">
    <location>
        <position position="54"/>
    </location>
</feature>